<evidence type="ECO:0000250" key="1"/>
<evidence type="ECO:0000255" key="2">
    <source>
        <dbReference type="PROSITE-ProRule" id="PRU00208"/>
    </source>
</evidence>
<evidence type="ECO:0000255" key="3">
    <source>
        <dbReference type="PROSITE-ProRule" id="PRU01024"/>
    </source>
</evidence>
<gene>
    <name type="ordered locus">BH0687</name>
</gene>
<sequence>MSKQQAPVNKNDVVEVTIEDLTHDGAGVAKVDGYALFIPKALPGERLKAKVVKVKKGYGFGRVLNMIEASPDRVEAPCPVFNQCGGCQLQHMSYDAQLRYKQKQVQDVLERIGKITAVTVRPTIGMNEPWRYRNKAQVPVGEREGGLIAGFYQERSHRIIDMDECMIQHEENDKVIRQVKELARELGIRGYDEEKHRGTLRHVVARYGKNTGEIMVVLITRGEELPHKKTLIERIHKAIPHVKSIVQNVNPKRTNVIFGDKTKVLWGEEYIYDTIGDIKFAISARSFYQVNPEQTKVLYDQALEFANLTGSETVIDAYCGIGTISLFLAQQAKHVYGVEIVPEAISDAKRNARLNGFANVQFAVGDAEKVMPWWYAQGVRADVIVVDPPRKGCDEALLKTILNMKPDRVVYVSCNPATLARDLRVLEDGGYETKDVQPVDMFPWTTHIESVAVLELKN</sequence>
<protein>
    <recommendedName>
        <fullName>Uncharacterized RNA methyltransferase BH0687</fullName>
        <ecNumber>2.1.1.-</ecNumber>
    </recommendedName>
</protein>
<feature type="chain" id="PRO_0000161951" description="Uncharacterized RNA methyltransferase BH0687">
    <location>
        <begin position="1"/>
        <end position="458"/>
    </location>
</feature>
<feature type="domain" description="TRAM" evidence="2">
    <location>
        <begin position="5"/>
        <end position="65"/>
    </location>
</feature>
<feature type="active site" description="Nucleophile" evidence="3">
    <location>
        <position position="414"/>
    </location>
</feature>
<feature type="binding site" evidence="1">
    <location>
        <position position="78"/>
    </location>
    <ligand>
        <name>[4Fe-4S] cluster</name>
        <dbReference type="ChEBI" id="CHEBI:49883"/>
    </ligand>
</feature>
<feature type="binding site" evidence="1">
    <location>
        <position position="84"/>
    </location>
    <ligand>
        <name>[4Fe-4S] cluster</name>
        <dbReference type="ChEBI" id="CHEBI:49883"/>
    </ligand>
</feature>
<feature type="binding site" evidence="1">
    <location>
        <position position="87"/>
    </location>
    <ligand>
        <name>[4Fe-4S] cluster</name>
        <dbReference type="ChEBI" id="CHEBI:49883"/>
    </ligand>
</feature>
<feature type="binding site" evidence="1">
    <location>
        <position position="165"/>
    </location>
    <ligand>
        <name>[4Fe-4S] cluster</name>
        <dbReference type="ChEBI" id="CHEBI:49883"/>
    </ligand>
</feature>
<feature type="binding site" evidence="3">
    <location>
        <position position="289"/>
    </location>
    <ligand>
        <name>S-adenosyl-L-methionine</name>
        <dbReference type="ChEBI" id="CHEBI:59789"/>
    </ligand>
</feature>
<feature type="binding site" evidence="3">
    <location>
        <position position="318"/>
    </location>
    <ligand>
        <name>S-adenosyl-L-methionine</name>
        <dbReference type="ChEBI" id="CHEBI:59789"/>
    </ligand>
</feature>
<feature type="binding site" evidence="3">
    <location>
        <position position="339"/>
    </location>
    <ligand>
        <name>S-adenosyl-L-methionine</name>
        <dbReference type="ChEBI" id="CHEBI:59789"/>
    </ligand>
</feature>
<feature type="binding site" evidence="3">
    <location>
        <position position="387"/>
    </location>
    <ligand>
        <name>S-adenosyl-L-methionine</name>
        <dbReference type="ChEBI" id="CHEBI:59789"/>
    </ligand>
</feature>
<name>Y687_HALH5</name>
<proteinExistence type="inferred from homology"/>
<keyword id="KW-0004">4Fe-4S</keyword>
<keyword id="KW-0408">Iron</keyword>
<keyword id="KW-0411">Iron-sulfur</keyword>
<keyword id="KW-0479">Metal-binding</keyword>
<keyword id="KW-0489">Methyltransferase</keyword>
<keyword id="KW-1185">Reference proteome</keyword>
<keyword id="KW-0949">S-adenosyl-L-methionine</keyword>
<keyword id="KW-0808">Transferase</keyword>
<organism>
    <name type="scientific">Halalkalibacterium halodurans (strain ATCC BAA-125 / DSM 18197 / FERM 7344 / JCM 9153 / C-125)</name>
    <name type="common">Bacillus halodurans</name>
    <dbReference type="NCBI Taxonomy" id="272558"/>
    <lineage>
        <taxon>Bacteria</taxon>
        <taxon>Bacillati</taxon>
        <taxon>Bacillota</taxon>
        <taxon>Bacilli</taxon>
        <taxon>Bacillales</taxon>
        <taxon>Bacillaceae</taxon>
        <taxon>Halalkalibacterium (ex Joshi et al. 2022)</taxon>
    </lineage>
</organism>
<dbReference type="EC" id="2.1.1.-"/>
<dbReference type="EMBL" id="BA000004">
    <property type="protein sequence ID" value="BAB04406.1"/>
    <property type="molecule type" value="Genomic_DNA"/>
</dbReference>
<dbReference type="PIR" id="G83735">
    <property type="entry name" value="G83735"/>
</dbReference>
<dbReference type="RefSeq" id="WP_010896862.1">
    <property type="nucleotide sequence ID" value="NC_002570.2"/>
</dbReference>
<dbReference type="SMR" id="Q9KF10"/>
<dbReference type="STRING" id="272558.gene:10726561"/>
<dbReference type="KEGG" id="bha:BH0687"/>
<dbReference type="eggNOG" id="COG2265">
    <property type="taxonomic scope" value="Bacteria"/>
</dbReference>
<dbReference type="HOGENOM" id="CLU_014689_7_0_9"/>
<dbReference type="OrthoDB" id="9804590at2"/>
<dbReference type="Proteomes" id="UP000001258">
    <property type="component" value="Chromosome"/>
</dbReference>
<dbReference type="GO" id="GO:0051539">
    <property type="term" value="F:4 iron, 4 sulfur cluster binding"/>
    <property type="evidence" value="ECO:0007669"/>
    <property type="project" value="UniProtKB-KW"/>
</dbReference>
<dbReference type="GO" id="GO:0046872">
    <property type="term" value="F:metal ion binding"/>
    <property type="evidence" value="ECO:0007669"/>
    <property type="project" value="UniProtKB-KW"/>
</dbReference>
<dbReference type="GO" id="GO:0070041">
    <property type="term" value="F:rRNA (uridine-C5-)-methyltransferase activity"/>
    <property type="evidence" value="ECO:0007669"/>
    <property type="project" value="TreeGrafter"/>
</dbReference>
<dbReference type="GO" id="GO:0070475">
    <property type="term" value="P:rRNA base methylation"/>
    <property type="evidence" value="ECO:0007669"/>
    <property type="project" value="TreeGrafter"/>
</dbReference>
<dbReference type="CDD" id="cd02440">
    <property type="entry name" value="AdoMet_MTases"/>
    <property type="match status" value="1"/>
</dbReference>
<dbReference type="FunFam" id="3.40.50.150:FF:000009">
    <property type="entry name" value="23S rRNA (Uracil(1939)-C(5))-methyltransferase RlmD"/>
    <property type="match status" value="1"/>
</dbReference>
<dbReference type="FunFam" id="2.40.50.140:FF:000097">
    <property type="entry name" value="23S rRNA (uracil(1939)-C(5))-methyltransferase RlmD"/>
    <property type="match status" value="1"/>
</dbReference>
<dbReference type="FunFam" id="2.40.50.1070:FF:000003">
    <property type="entry name" value="23S rRNA (Uracil-5-)-methyltransferase RumA"/>
    <property type="match status" value="1"/>
</dbReference>
<dbReference type="Gene3D" id="2.40.50.1070">
    <property type="match status" value="1"/>
</dbReference>
<dbReference type="Gene3D" id="2.40.50.140">
    <property type="entry name" value="Nucleic acid-binding proteins"/>
    <property type="match status" value="1"/>
</dbReference>
<dbReference type="Gene3D" id="3.40.50.150">
    <property type="entry name" value="Vaccinia Virus protein VP39"/>
    <property type="match status" value="1"/>
</dbReference>
<dbReference type="InterPro" id="IPR030390">
    <property type="entry name" value="MeTrfase_TrmA_AS"/>
</dbReference>
<dbReference type="InterPro" id="IPR030391">
    <property type="entry name" value="MeTrfase_TrmA_CS"/>
</dbReference>
<dbReference type="InterPro" id="IPR012340">
    <property type="entry name" value="NA-bd_OB-fold"/>
</dbReference>
<dbReference type="InterPro" id="IPR029063">
    <property type="entry name" value="SAM-dependent_MTases_sf"/>
</dbReference>
<dbReference type="InterPro" id="IPR002792">
    <property type="entry name" value="TRAM_dom"/>
</dbReference>
<dbReference type="InterPro" id="IPR010280">
    <property type="entry name" value="U5_MeTrfase_fam"/>
</dbReference>
<dbReference type="NCBIfam" id="TIGR00479">
    <property type="entry name" value="rumA"/>
    <property type="match status" value="1"/>
</dbReference>
<dbReference type="PANTHER" id="PTHR11061">
    <property type="entry name" value="RNA M5U METHYLTRANSFERASE"/>
    <property type="match status" value="1"/>
</dbReference>
<dbReference type="PANTHER" id="PTHR11061:SF30">
    <property type="entry name" value="TRNA (URACIL(54)-C(5))-METHYLTRANSFERASE"/>
    <property type="match status" value="1"/>
</dbReference>
<dbReference type="Pfam" id="PF01938">
    <property type="entry name" value="TRAM"/>
    <property type="match status" value="1"/>
</dbReference>
<dbReference type="Pfam" id="PF05958">
    <property type="entry name" value="tRNA_U5-meth_tr"/>
    <property type="match status" value="1"/>
</dbReference>
<dbReference type="SUPFAM" id="SSF50249">
    <property type="entry name" value="Nucleic acid-binding proteins"/>
    <property type="match status" value="1"/>
</dbReference>
<dbReference type="SUPFAM" id="SSF53335">
    <property type="entry name" value="S-adenosyl-L-methionine-dependent methyltransferases"/>
    <property type="match status" value="1"/>
</dbReference>
<dbReference type="PROSITE" id="PS51687">
    <property type="entry name" value="SAM_MT_RNA_M5U"/>
    <property type="match status" value="1"/>
</dbReference>
<dbReference type="PROSITE" id="PS50926">
    <property type="entry name" value="TRAM"/>
    <property type="match status" value="1"/>
</dbReference>
<dbReference type="PROSITE" id="PS01230">
    <property type="entry name" value="TRMA_1"/>
    <property type="match status" value="1"/>
</dbReference>
<dbReference type="PROSITE" id="PS01231">
    <property type="entry name" value="TRMA_2"/>
    <property type="match status" value="1"/>
</dbReference>
<accession>Q9KF10</accession>
<comment type="similarity">
    <text evidence="3">Belongs to the class I-like SAM-binding methyltransferase superfamily. RNA M5U methyltransferase family.</text>
</comment>
<reference key="1">
    <citation type="journal article" date="2000" name="Nucleic Acids Res.">
        <title>Complete genome sequence of the alkaliphilic bacterium Bacillus halodurans and genomic sequence comparison with Bacillus subtilis.</title>
        <authorList>
            <person name="Takami H."/>
            <person name="Nakasone K."/>
            <person name="Takaki Y."/>
            <person name="Maeno G."/>
            <person name="Sasaki R."/>
            <person name="Masui N."/>
            <person name="Fuji F."/>
            <person name="Hirama C."/>
            <person name="Nakamura Y."/>
            <person name="Ogasawara N."/>
            <person name="Kuhara S."/>
            <person name="Horikoshi K."/>
        </authorList>
    </citation>
    <scope>NUCLEOTIDE SEQUENCE [LARGE SCALE GENOMIC DNA]</scope>
    <source>
        <strain>ATCC BAA-125 / DSM 18197 / FERM 7344 / JCM 9153 / C-125</strain>
    </source>
</reference>